<organism>
    <name type="scientific">Burkholderia pseudomallei (strain 1106a)</name>
    <dbReference type="NCBI Taxonomy" id="357348"/>
    <lineage>
        <taxon>Bacteria</taxon>
        <taxon>Pseudomonadati</taxon>
        <taxon>Pseudomonadota</taxon>
        <taxon>Betaproteobacteria</taxon>
        <taxon>Burkholderiales</taxon>
        <taxon>Burkholderiaceae</taxon>
        <taxon>Burkholderia</taxon>
        <taxon>pseudomallei group</taxon>
    </lineage>
</organism>
<feature type="chain" id="PRO_0000306941" description="Aspartate 1-decarboxylase beta chain" evidence="1">
    <location>
        <begin position="1"/>
        <end position="24"/>
    </location>
</feature>
<feature type="chain" id="PRO_0000306942" description="Aspartate 1-decarboxylase alpha chain" evidence="1">
    <location>
        <begin position="25"/>
        <end position="128"/>
    </location>
</feature>
<feature type="active site" description="Schiff-base intermediate with substrate; via pyruvic acid" evidence="1">
    <location>
        <position position="25"/>
    </location>
</feature>
<feature type="active site" description="Proton donor" evidence="1">
    <location>
        <position position="58"/>
    </location>
</feature>
<feature type="binding site" evidence="1">
    <location>
        <position position="57"/>
    </location>
    <ligand>
        <name>substrate</name>
    </ligand>
</feature>
<feature type="binding site" evidence="1">
    <location>
        <begin position="73"/>
        <end position="75"/>
    </location>
    <ligand>
        <name>substrate</name>
    </ligand>
</feature>
<feature type="modified residue" description="Pyruvic acid (Ser)" evidence="1">
    <location>
        <position position="25"/>
    </location>
</feature>
<reference key="1">
    <citation type="journal article" date="2010" name="Genome Biol. Evol.">
        <title>Continuing evolution of Burkholderia mallei through genome reduction and large-scale rearrangements.</title>
        <authorList>
            <person name="Losada L."/>
            <person name="Ronning C.M."/>
            <person name="DeShazer D."/>
            <person name="Woods D."/>
            <person name="Fedorova N."/>
            <person name="Kim H.S."/>
            <person name="Shabalina S.A."/>
            <person name="Pearson T.R."/>
            <person name="Brinkac L."/>
            <person name="Tan P."/>
            <person name="Nandi T."/>
            <person name="Crabtree J."/>
            <person name="Badger J."/>
            <person name="Beckstrom-Sternberg S."/>
            <person name="Saqib M."/>
            <person name="Schutzer S.E."/>
            <person name="Keim P."/>
            <person name="Nierman W.C."/>
        </authorList>
    </citation>
    <scope>NUCLEOTIDE SEQUENCE [LARGE SCALE GENOMIC DNA]</scope>
    <source>
        <strain>1106a</strain>
    </source>
</reference>
<proteinExistence type="inferred from homology"/>
<sequence length="128" mass="14392">MQRHMLKSKIHRAAVTHCELHYEGSCAIDEDLLEAANIVENERIDIWNVNNGERFSTYAIKGERGSGMISLNGSAARRAQLGDLVIIAAFAMIDEQELKAGWKPDLVFVDEDNKIKGSRDHVPTQNWT</sequence>
<name>PAND_BURP0</name>
<accession>A3NSK7</accession>
<comment type="function">
    <text evidence="1">Catalyzes the pyruvoyl-dependent decarboxylation of aspartate to produce beta-alanine.</text>
</comment>
<comment type="catalytic activity">
    <reaction evidence="1">
        <text>L-aspartate + H(+) = beta-alanine + CO2</text>
        <dbReference type="Rhea" id="RHEA:19497"/>
        <dbReference type="ChEBI" id="CHEBI:15378"/>
        <dbReference type="ChEBI" id="CHEBI:16526"/>
        <dbReference type="ChEBI" id="CHEBI:29991"/>
        <dbReference type="ChEBI" id="CHEBI:57966"/>
        <dbReference type="EC" id="4.1.1.11"/>
    </reaction>
</comment>
<comment type="cofactor">
    <cofactor evidence="1">
        <name>pyruvate</name>
        <dbReference type="ChEBI" id="CHEBI:15361"/>
    </cofactor>
    <text evidence="1">Binds 1 pyruvoyl group covalently per subunit.</text>
</comment>
<comment type="pathway">
    <text evidence="1">Cofactor biosynthesis; (R)-pantothenate biosynthesis; beta-alanine from L-aspartate: step 1/1.</text>
</comment>
<comment type="subunit">
    <text evidence="1">Heterooctamer of four alpha and four beta subunits.</text>
</comment>
<comment type="subcellular location">
    <subcellularLocation>
        <location evidence="1">Cytoplasm</location>
    </subcellularLocation>
</comment>
<comment type="PTM">
    <text evidence="1">Is synthesized initially as an inactive proenzyme, which is activated by self-cleavage at a specific serine bond to produce a beta-subunit with a hydroxyl group at its C-terminus and an alpha-subunit with a pyruvoyl group at its N-terminus.</text>
</comment>
<comment type="similarity">
    <text evidence="1">Belongs to the PanD family.</text>
</comment>
<gene>
    <name evidence="1" type="primary">panD</name>
    <name type="ordered locus">BURPS1106A_1048</name>
</gene>
<keyword id="KW-0068">Autocatalytic cleavage</keyword>
<keyword id="KW-0963">Cytoplasm</keyword>
<keyword id="KW-0210">Decarboxylase</keyword>
<keyword id="KW-0456">Lyase</keyword>
<keyword id="KW-0566">Pantothenate biosynthesis</keyword>
<keyword id="KW-0670">Pyruvate</keyword>
<keyword id="KW-0704">Schiff base</keyword>
<keyword id="KW-0865">Zymogen</keyword>
<dbReference type="EC" id="4.1.1.11" evidence="1"/>
<dbReference type="EMBL" id="CP000572">
    <property type="protein sequence ID" value="ABN90129.1"/>
    <property type="molecule type" value="Genomic_DNA"/>
</dbReference>
<dbReference type="RefSeq" id="WP_004191357.1">
    <property type="nucleotide sequence ID" value="NC_009076.1"/>
</dbReference>
<dbReference type="SMR" id="A3NSK7"/>
<dbReference type="GeneID" id="92978462"/>
<dbReference type="KEGG" id="bpl:BURPS1106A_1048"/>
<dbReference type="HOGENOM" id="CLU_115305_2_1_4"/>
<dbReference type="UniPathway" id="UPA00028">
    <property type="reaction ID" value="UER00002"/>
</dbReference>
<dbReference type="Proteomes" id="UP000006738">
    <property type="component" value="Chromosome I"/>
</dbReference>
<dbReference type="GO" id="GO:0005829">
    <property type="term" value="C:cytosol"/>
    <property type="evidence" value="ECO:0007669"/>
    <property type="project" value="TreeGrafter"/>
</dbReference>
<dbReference type="GO" id="GO:0004068">
    <property type="term" value="F:aspartate 1-decarboxylase activity"/>
    <property type="evidence" value="ECO:0007669"/>
    <property type="project" value="UniProtKB-UniRule"/>
</dbReference>
<dbReference type="GO" id="GO:0006523">
    <property type="term" value="P:alanine biosynthetic process"/>
    <property type="evidence" value="ECO:0007669"/>
    <property type="project" value="InterPro"/>
</dbReference>
<dbReference type="GO" id="GO:0015940">
    <property type="term" value="P:pantothenate biosynthetic process"/>
    <property type="evidence" value="ECO:0007669"/>
    <property type="project" value="UniProtKB-UniRule"/>
</dbReference>
<dbReference type="CDD" id="cd06919">
    <property type="entry name" value="Asp_decarbox"/>
    <property type="match status" value="1"/>
</dbReference>
<dbReference type="Gene3D" id="2.40.40.20">
    <property type="match status" value="1"/>
</dbReference>
<dbReference type="HAMAP" id="MF_00446">
    <property type="entry name" value="PanD"/>
    <property type="match status" value="1"/>
</dbReference>
<dbReference type="InterPro" id="IPR009010">
    <property type="entry name" value="Asp_de-COase-like_dom_sf"/>
</dbReference>
<dbReference type="InterPro" id="IPR003190">
    <property type="entry name" value="Asp_decarbox"/>
</dbReference>
<dbReference type="NCBIfam" id="TIGR00223">
    <property type="entry name" value="panD"/>
    <property type="match status" value="1"/>
</dbReference>
<dbReference type="PANTHER" id="PTHR21012">
    <property type="entry name" value="ASPARTATE 1-DECARBOXYLASE"/>
    <property type="match status" value="1"/>
</dbReference>
<dbReference type="PANTHER" id="PTHR21012:SF0">
    <property type="entry name" value="ASPARTATE 1-DECARBOXYLASE"/>
    <property type="match status" value="1"/>
</dbReference>
<dbReference type="Pfam" id="PF02261">
    <property type="entry name" value="Asp_decarbox"/>
    <property type="match status" value="1"/>
</dbReference>
<dbReference type="PIRSF" id="PIRSF006246">
    <property type="entry name" value="Asp_decarbox"/>
    <property type="match status" value="1"/>
</dbReference>
<dbReference type="SUPFAM" id="SSF50692">
    <property type="entry name" value="ADC-like"/>
    <property type="match status" value="1"/>
</dbReference>
<evidence type="ECO:0000255" key="1">
    <source>
        <dbReference type="HAMAP-Rule" id="MF_00446"/>
    </source>
</evidence>
<protein>
    <recommendedName>
        <fullName evidence="1">Aspartate 1-decarboxylase</fullName>
        <ecNumber evidence="1">4.1.1.11</ecNumber>
    </recommendedName>
    <alternativeName>
        <fullName evidence="1">Aspartate alpha-decarboxylase</fullName>
    </alternativeName>
    <component>
        <recommendedName>
            <fullName evidence="1">Aspartate 1-decarboxylase beta chain</fullName>
        </recommendedName>
    </component>
    <component>
        <recommendedName>
            <fullName evidence="1">Aspartate 1-decarboxylase alpha chain</fullName>
        </recommendedName>
    </component>
</protein>